<keyword id="KW-0067">ATP-binding</keyword>
<keyword id="KW-0963">Cytoplasm</keyword>
<keyword id="KW-0227">DNA damage</keyword>
<keyword id="KW-0233">DNA recombination</keyword>
<keyword id="KW-0234">DNA repair</keyword>
<keyword id="KW-0238">DNA-binding</keyword>
<keyword id="KW-0547">Nucleotide-binding</keyword>
<keyword id="KW-1185">Reference proteome</keyword>
<keyword id="KW-0742">SOS response</keyword>
<feature type="chain" id="PRO_1000047882" description="Protein RecA">
    <location>
        <begin position="1"/>
        <end position="345"/>
    </location>
</feature>
<feature type="binding site" evidence="1">
    <location>
        <begin position="67"/>
        <end position="74"/>
    </location>
    <ligand>
        <name>ATP</name>
        <dbReference type="ChEBI" id="CHEBI:30616"/>
    </ligand>
</feature>
<proteinExistence type="inferred from homology"/>
<evidence type="ECO:0000255" key="1">
    <source>
        <dbReference type="HAMAP-Rule" id="MF_00268"/>
    </source>
</evidence>
<dbReference type="EMBL" id="CP000481">
    <property type="protein sequence ID" value="ABK53264.1"/>
    <property type="molecule type" value="Genomic_DNA"/>
</dbReference>
<dbReference type="RefSeq" id="WP_011720327.1">
    <property type="nucleotide sequence ID" value="NC_008578.1"/>
</dbReference>
<dbReference type="SMR" id="A0LV04"/>
<dbReference type="STRING" id="351607.Acel_1492"/>
<dbReference type="KEGG" id="ace:Acel_1492"/>
<dbReference type="eggNOG" id="COG0468">
    <property type="taxonomic scope" value="Bacteria"/>
</dbReference>
<dbReference type="HOGENOM" id="CLU_040469_3_2_11"/>
<dbReference type="InParanoid" id="A0LV04"/>
<dbReference type="OrthoDB" id="9776733at2"/>
<dbReference type="Proteomes" id="UP000008221">
    <property type="component" value="Chromosome"/>
</dbReference>
<dbReference type="GO" id="GO:0005829">
    <property type="term" value="C:cytosol"/>
    <property type="evidence" value="ECO:0007669"/>
    <property type="project" value="TreeGrafter"/>
</dbReference>
<dbReference type="GO" id="GO:0005524">
    <property type="term" value="F:ATP binding"/>
    <property type="evidence" value="ECO:0007669"/>
    <property type="project" value="UniProtKB-UniRule"/>
</dbReference>
<dbReference type="GO" id="GO:0016887">
    <property type="term" value="F:ATP hydrolysis activity"/>
    <property type="evidence" value="ECO:0007669"/>
    <property type="project" value="InterPro"/>
</dbReference>
<dbReference type="GO" id="GO:0140664">
    <property type="term" value="F:ATP-dependent DNA damage sensor activity"/>
    <property type="evidence" value="ECO:0007669"/>
    <property type="project" value="InterPro"/>
</dbReference>
<dbReference type="GO" id="GO:0003684">
    <property type="term" value="F:damaged DNA binding"/>
    <property type="evidence" value="ECO:0007669"/>
    <property type="project" value="UniProtKB-UniRule"/>
</dbReference>
<dbReference type="GO" id="GO:0003697">
    <property type="term" value="F:single-stranded DNA binding"/>
    <property type="evidence" value="ECO:0007669"/>
    <property type="project" value="UniProtKB-UniRule"/>
</dbReference>
<dbReference type="GO" id="GO:0006310">
    <property type="term" value="P:DNA recombination"/>
    <property type="evidence" value="ECO:0007669"/>
    <property type="project" value="UniProtKB-UniRule"/>
</dbReference>
<dbReference type="GO" id="GO:0006281">
    <property type="term" value="P:DNA repair"/>
    <property type="evidence" value="ECO:0007669"/>
    <property type="project" value="UniProtKB-UniRule"/>
</dbReference>
<dbReference type="GO" id="GO:0009432">
    <property type="term" value="P:SOS response"/>
    <property type="evidence" value="ECO:0007669"/>
    <property type="project" value="UniProtKB-UniRule"/>
</dbReference>
<dbReference type="CDD" id="cd00983">
    <property type="entry name" value="RecA"/>
    <property type="match status" value="1"/>
</dbReference>
<dbReference type="FunFam" id="3.40.50.300:FF:000087">
    <property type="entry name" value="Recombinase RecA"/>
    <property type="match status" value="1"/>
</dbReference>
<dbReference type="Gene3D" id="3.40.50.300">
    <property type="entry name" value="P-loop containing nucleotide triphosphate hydrolases"/>
    <property type="match status" value="1"/>
</dbReference>
<dbReference type="HAMAP" id="MF_00268">
    <property type="entry name" value="RecA"/>
    <property type="match status" value="1"/>
</dbReference>
<dbReference type="InterPro" id="IPR003593">
    <property type="entry name" value="AAA+_ATPase"/>
</dbReference>
<dbReference type="InterPro" id="IPR013765">
    <property type="entry name" value="DNA_recomb/repair_RecA"/>
</dbReference>
<dbReference type="InterPro" id="IPR020584">
    <property type="entry name" value="DNA_recomb/repair_RecA_CS"/>
</dbReference>
<dbReference type="InterPro" id="IPR027417">
    <property type="entry name" value="P-loop_NTPase"/>
</dbReference>
<dbReference type="InterPro" id="IPR049261">
    <property type="entry name" value="RecA-like_C"/>
</dbReference>
<dbReference type="InterPro" id="IPR049428">
    <property type="entry name" value="RecA-like_N"/>
</dbReference>
<dbReference type="InterPro" id="IPR020588">
    <property type="entry name" value="RecA_ATP-bd"/>
</dbReference>
<dbReference type="InterPro" id="IPR023400">
    <property type="entry name" value="RecA_C_sf"/>
</dbReference>
<dbReference type="InterPro" id="IPR020587">
    <property type="entry name" value="RecA_monomer-monomer_interface"/>
</dbReference>
<dbReference type="NCBIfam" id="TIGR02012">
    <property type="entry name" value="tigrfam_recA"/>
    <property type="match status" value="1"/>
</dbReference>
<dbReference type="PANTHER" id="PTHR45900:SF1">
    <property type="entry name" value="MITOCHONDRIAL DNA REPAIR PROTEIN RECA HOMOLOG-RELATED"/>
    <property type="match status" value="1"/>
</dbReference>
<dbReference type="PANTHER" id="PTHR45900">
    <property type="entry name" value="RECA"/>
    <property type="match status" value="1"/>
</dbReference>
<dbReference type="Pfam" id="PF00154">
    <property type="entry name" value="RecA"/>
    <property type="match status" value="1"/>
</dbReference>
<dbReference type="Pfam" id="PF21096">
    <property type="entry name" value="RecA_C"/>
    <property type="match status" value="1"/>
</dbReference>
<dbReference type="PRINTS" id="PR00142">
    <property type="entry name" value="RECA"/>
</dbReference>
<dbReference type="SMART" id="SM00382">
    <property type="entry name" value="AAA"/>
    <property type="match status" value="1"/>
</dbReference>
<dbReference type="SUPFAM" id="SSF52540">
    <property type="entry name" value="P-loop containing nucleoside triphosphate hydrolases"/>
    <property type="match status" value="1"/>
</dbReference>
<dbReference type="SUPFAM" id="SSF54752">
    <property type="entry name" value="RecA protein, C-terminal domain"/>
    <property type="match status" value="1"/>
</dbReference>
<dbReference type="PROSITE" id="PS00321">
    <property type="entry name" value="RECA_1"/>
    <property type="match status" value="1"/>
</dbReference>
<dbReference type="PROSITE" id="PS50162">
    <property type="entry name" value="RECA_2"/>
    <property type="match status" value="1"/>
</dbReference>
<dbReference type="PROSITE" id="PS50163">
    <property type="entry name" value="RECA_3"/>
    <property type="match status" value="1"/>
</dbReference>
<reference key="1">
    <citation type="journal article" date="2009" name="Genome Res.">
        <title>Complete genome of the cellulolytic thermophile Acidothermus cellulolyticus 11B provides insights into its ecophysiological and evolutionary adaptations.</title>
        <authorList>
            <person name="Barabote R.D."/>
            <person name="Xie G."/>
            <person name="Leu D.H."/>
            <person name="Normand P."/>
            <person name="Necsulea A."/>
            <person name="Daubin V."/>
            <person name="Medigue C."/>
            <person name="Adney W.S."/>
            <person name="Xu X.C."/>
            <person name="Lapidus A."/>
            <person name="Parales R.E."/>
            <person name="Detter C."/>
            <person name="Pujic P."/>
            <person name="Bruce D."/>
            <person name="Lavire C."/>
            <person name="Challacombe J.F."/>
            <person name="Brettin T.S."/>
            <person name="Berry A.M."/>
        </authorList>
    </citation>
    <scope>NUCLEOTIDE SEQUENCE [LARGE SCALE GENOMIC DNA]</scope>
    <source>
        <strain>ATCC 43068 / DSM 8971 / 11B</strain>
    </source>
</reference>
<organism>
    <name type="scientific">Acidothermus cellulolyticus (strain ATCC 43068 / DSM 8971 / 11B)</name>
    <dbReference type="NCBI Taxonomy" id="351607"/>
    <lineage>
        <taxon>Bacteria</taxon>
        <taxon>Bacillati</taxon>
        <taxon>Actinomycetota</taxon>
        <taxon>Actinomycetes</taxon>
        <taxon>Acidothermales</taxon>
        <taxon>Acidothermaceae</taxon>
        <taxon>Acidothermus</taxon>
    </lineage>
</organism>
<name>RECA_ACIC1</name>
<gene>
    <name evidence="1" type="primary">recA</name>
    <name type="ordered locus">Acel_1492</name>
</gene>
<comment type="function">
    <text evidence="1">Can catalyze the hydrolysis of ATP in the presence of single-stranded DNA, the ATP-dependent uptake of single-stranded DNA by duplex DNA, and the ATP-dependent hybridization of homologous single-stranded DNAs. It interacts with LexA causing its activation and leading to its autocatalytic cleavage.</text>
</comment>
<comment type="subcellular location">
    <subcellularLocation>
        <location evidence="1">Cytoplasm</location>
    </subcellularLocation>
</comment>
<comment type="similarity">
    <text evidence="1">Belongs to the RecA family.</text>
</comment>
<accession>A0LV04</accession>
<sequence length="345" mass="37095">MAAAFDREKALEHAIAQIERAHGKGSLMRLGDEARAPIDVIPTGSIALDVALGIGGLPRGRIVEIYGPESSGKTTLALHAVANAQRAGGIAAFIDAEHALDPEYAKKLGVDTDNLLVSQPDTGEQALEIADTLIRSGAIDVVVIDSVAALVPRAEIEGEMGDSHVGLQARLMSQALRKITGALSHSGTTAIFINQLREKVGVFFGSPETTTGGKALKFYASIRLDVRRIDTIKEGQEAIGNRTRVKVVKNKCASPFRQAEFDILYNVGISREGSLIDMGVEHGIIRKSGAWYTYEGDQLGQGKENARNFLRENPDLADEIEKKIKEKLGIGPRVDAPIDLTVVER</sequence>
<protein>
    <recommendedName>
        <fullName evidence="1">Protein RecA</fullName>
    </recommendedName>
    <alternativeName>
        <fullName evidence="1">Recombinase A</fullName>
    </alternativeName>
</protein>